<proteinExistence type="inferred from homology"/>
<accession>Q87042</accession>
<organismHost>
    <name type="scientific">Pan troglodytes</name>
    <name type="common">Chimpanzee</name>
    <dbReference type="NCBI Taxonomy" id="9598"/>
</organismHost>
<sequence length="300" mass="33834">MDSYQEEEPVASTSGLQDLQTLSELVGPENAGEGDLVIAEEPEENPRRPRRYTKRDVKCVSYHAYKELEDKHPHHIKLQDWIPKPEEMSKSICKRLILCGLYSGEKAREILKKPFTVSWEQSETNPDCFIVSYTCIFCDAVIHDPMPVVWDSEVEIWVKYKPLRGIVGSAVFIMEKHQKNCSLVKPSTSCPEGPKPRRRHDPVLRCDMFEKHHKPRPKRSRKRSIDHESCASSGDTVANESGPLCTNTFWTPGPVLQGLLGESSNLPDLEVHMSGGPFWKEVYGDSILGPPSGSGEHSVL</sequence>
<evidence type="ECO:0000250" key="1"/>
<evidence type="ECO:0000255" key="2"/>
<evidence type="ECO:0000256" key="3">
    <source>
        <dbReference type="SAM" id="MobiDB-lite"/>
    </source>
</evidence>
<feature type="chain" id="PRO_0000378586" description="Protein Bel-1">
    <location>
        <begin position="1"/>
        <end position="300"/>
    </location>
</feature>
<feature type="DNA-binding region" evidence="2">
    <location>
        <begin position="89"/>
        <end position="200"/>
    </location>
</feature>
<feature type="region of interest" description="Disordered" evidence="3">
    <location>
        <begin position="1"/>
        <end position="20"/>
    </location>
</feature>
<feature type="region of interest" description="Disordered" evidence="3">
    <location>
        <begin position="26"/>
        <end position="50"/>
    </location>
</feature>
<feature type="region of interest" description="Disordered" evidence="3">
    <location>
        <begin position="185"/>
        <end position="237"/>
    </location>
</feature>
<feature type="region of interest" description="Transactivation domain" evidence="2">
    <location>
        <begin position="224"/>
        <end position="300"/>
    </location>
</feature>
<feature type="short sequence motif" description="Nuclear localization signal" evidence="1">
    <location>
        <begin position="214"/>
        <end position="223"/>
    </location>
</feature>
<feature type="compositionally biased region" description="Polar residues" evidence="3">
    <location>
        <begin position="11"/>
        <end position="20"/>
    </location>
</feature>
<feature type="compositionally biased region" description="Basic and acidic residues" evidence="3">
    <location>
        <begin position="201"/>
        <end position="210"/>
    </location>
</feature>
<feature type="compositionally biased region" description="Basic residues" evidence="3">
    <location>
        <begin position="211"/>
        <end position="222"/>
    </location>
</feature>
<dbReference type="EMBL" id="U04327">
    <property type="protein sequence ID" value="AAA19980.1"/>
    <property type="molecule type" value="Genomic_DNA"/>
</dbReference>
<dbReference type="RefSeq" id="NP_056805.1">
    <property type="nucleotide sequence ID" value="NC_001364.1"/>
</dbReference>
<dbReference type="GeneID" id="1489967"/>
<dbReference type="KEGG" id="vg:1489967"/>
<dbReference type="Proteomes" id="UP000001063">
    <property type="component" value="Segment"/>
</dbReference>
<dbReference type="GO" id="GO:0042025">
    <property type="term" value="C:host cell nucleus"/>
    <property type="evidence" value="ECO:0007669"/>
    <property type="project" value="UniProtKB-SubCell"/>
</dbReference>
<dbReference type="GO" id="GO:0003677">
    <property type="term" value="F:DNA binding"/>
    <property type="evidence" value="ECO:0007669"/>
    <property type="project" value="UniProtKB-KW"/>
</dbReference>
<dbReference type="GO" id="GO:0045893">
    <property type="term" value="P:positive regulation of DNA-templated transcription"/>
    <property type="evidence" value="ECO:0007669"/>
    <property type="project" value="InterPro"/>
</dbReference>
<dbReference type="GO" id="GO:0016032">
    <property type="term" value="P:viral process"/>
    <property type="evidence" value="ECO:0007669"/>
    <property type="project" value="InterPro"/>
</dbReference>
<dbReference type="InterPro" id="IPR004956">
    <property type="entry name" value="Foamy_BEL"/>
</dbReference>
<dbReference type="Pfam" id="PF03274">
    <property type="entry name" value="Foamy_BEL"/>
    <property type="match status" value="2"/>
</dbReference>
<reference key="1">
    <citation type="journal article" date="1994" name="Virology">
        <title>Isolation, cloning, and sequencing of simian foamy viruses from chimpanzees (SFVcpz): high homology to human foamy virus (HFV).</title>
        <authorList>
            <person name="Herchenroder O."/>
            <person name="Renne R."/>
            <person name="Loncar D."/>
            <person name="Cobb E.K."/>
            <person name="Murthy K.K."/>
            <person name="Schneider J."/>
            <person name="Mergia A."/>
            <person name="Luciw P.A."/>
        </authorList>
    </citation>
    <scope>NUCLEOTIDE SEQUENCE [GENOMIC DNA]</scope>
</reference>
<gene>
    <name type="primary">bel1</name>
    <name type="synonym">Taf</name>
    <name type="synonym">tas</name>
</gene>
<name>BEL1_SFVCP</name>
<comment type="function">
    <text evidence="1">Transcriptional transactivator that activates the viral internal promoter (IP), thereby enhancing its own expression. This transactivation is repressed by nuclear factor I. Also transactivates the long terminal repeat (LTR) promoter, thereby inducing structural gene expression, initiating the late phase of infection. It is therefore a key regulator of viral gene expression. It directly binds to and activates DNA target sites of viral promoters and those of distinct cellular genes. Required for viral replication (By similarity).</text>
</comment>
<comment type="subunit">
    <text evidence="1">Homodimer or homomultimer. Forms complexes with the host nuclear factors NFIA, NFIB, NFIC or NFIX (By similarity).</text>
</comment>
<comment type="subcellular location">
    <subcellularLocation>
        <location evidence="1">Host nucleus</location>
    </subcellularLocation>
</comment>
<comment type="alternative products">
    <event type="alternative splicing"/>
    <isoform>
        <id>Q87042-1</id>
        <name>Bel-1</name>
        <name>Bel1</name>
        <sequence type="displayed"/>
    </isoform>
    <isoform>
        <id>Q87043-1</id>
        <name>Bet</name>
        <sequence type="external"/>
    </isoform>
    <isoform>
        <id>Q87043-2</id>
        <name>Bel-2</name>
        <name>Bel2</name>
        <sequence type="external"/>
    </isoform>
    <text>The first 88 residues are shared by isoform Bel-1 and isoform Bet.</text>
</comment>
<protein>
    <recommendedName>
        <fullName>Protein Bel-1</fullName>
    </recommendedName>
    <alternativeName>
        <fullName>Transactivator of spumavirus</fullName>
        <shortName>Tas</shortName>
    </alternativeName>
    <alternativeName>
        <fullName>Transcriptional transactivator</fullName>
    </alternativeName>
</protein>
<organism>
    <name type="scientific">Simian foamy virus (isolate chimpanzee)</name>
    <name type="common">SFVcpz</name>
    <dbReference type="NCBI Taxonomy" id="298339"/>
    <lineage>
        <taxon>Viruses</taxon>
        <taxon>Riboviria</taxon>
        <taxon>Pararnavirae</taxon>
        <taxon>Artverviricota</taxon>
        <taxon>Revtraviricetes</taxon>
        <taxon>Ortervirales</taxon>
        <taxon>Retroviridae</taxon>
        <taxon>Spumaretrovirinae</taxon>
        <taxon>Spumavirus</taxon>
        <taxon>Simian foamy virus</taxon>
    </lineage>
</organism>
<keyword id="KW-0010">Activator</keyword>
<keyword id="KW-0025">Alternative splicing</keyword>
<keyword id="KW-0238">DNA-binding</keyword>
<keyword id="KW-1048">Host nucleus</keyword>
<keyword id="KW-1185">Reference proteome</keyword>
<keyword id="KW-0804">Transcription</keyword>
<keyword id="KW-0805">Transcription regulation</keyword>